<keyword id="KW-0002">3D-structure</keyword>
<keyword id="KW-1035">Host cytoplasm</keyword>
<keyword id="KW-1048">Host nucleus</keyword>
<keyword id="KW-0945">Host-virus interaction</keyword>
<keyword id="KW-1100">Inhibition of host NF-kappa-B by virus</keyword>
<keyword id="KW-1185">Reference proteome</keyword>
<protein>
    <recommendedName>
        <fullName>Protein A49R</fullName>
    </recommendedName>
</protein>
<reference key="1">
    <citation type="journal article" date="1991" name="J. Gen. Virol.">
        <title>Nucleotide sequence of 42 kbp of vaccinia virus strain WR from near the right inverted terminal repeat.</title>
        <authorList>
            <person name="Smith G.L."/>
            <person name="Chan Y.S."/>
            <person name="Howard S.T."/>
        </authorList>
    </citation>
    <scope>NUCLEOTIDE SEQUENCE [GENOMIC DNA]</scope>
</reference>
<reference key="2">
    <citation type="submission" date="2003-02" db="EMBL/GenBank/DDBJ databases">
        <title>Sequencing of the coding region of Vaccinia-WR to an average 9-fold redundancy and an error rate of 0.16/10kb.</title>
        <authorList>
            <person name="Esposito J.J."/>
            <person name="Frace A.M."/>
            <person name="Sammons S.A."/>
            <person name="Olsen-Rasmussen M."/>
            <person name="Osborne J."/>
            <person name="Wohlhueter R."/>
        </authorList>
    </citation>
    <scope>NUCLEOTIDE SEQUENCE [LARGE SCALE GENOMIC DNA]</scope>
</reference>
<reference key="3">
    <citation type="journal article" date="2013" name="PLoS Pathog.">
        <title>Poxvirus targeting of E3 ligase beta-TrCP by molecular mimicry: a mechanism to inhibit NF-kappaB activation and promote immune evasion and virulence.</title>
        <authorList>
            <person name="Mansur D.S."/>
            <person name="Maluquer de Motes C."/>
            <person name="Unterholzner L."/>
            <person name="Sumner R.P."/>
            <person name="Ferguson B.J."/>
            <person name="Ren H."/>
            <person name="Strnadova P."/>
            <person name="Bowie A.G."/>
            <person name="Smith G.L."/>
        </authorList>
    </citation>
    <scope>FUNCTION</scope>
    <scope>INTERACTION WITH HOST BTRC</scope>
    <scope>SUBCELLULAR LOCATION</scope>
</reference>
<comment type="function">
    <text evidence="1">Plays a role in the inhibition of host NF-kappa-B activation. Interacts with host BTRC and thereby diminishes ubiquitination of NF-kappa-B inhibitor alpha/NFKBIA. This stabilizes NFKBIA and its interaction with NF-kappaB, so retaining p65/RELA in the cytoplasm and preventing NF-kappa-B-dependent gene expression.</text>
</comment>
<comment type="subunit">
    <text evidence="1">Interacts with host BTRC; this interaction inhibits NF-kappa-B activation.</text>
</comment>
<comment type="subcellular location">
    <subcellularLocation>
        <location evidence="1">Host cytoplasm</location>
    </subcellularLocation>
    <subcellularLocation>
        <location evidence="1">Host nucleus</location>
    </subcellularLocation>
</comment>
<comment type="similarity">
    <text evidence="2">Belongs to the poxviridae A49 protein family.</text>
</comment>
<accession>P31037</accession>
<accession>Q76ZM9</accession>
<gene>
    <name type="ordered locus">VACWR175</name>
    <name type="ORF">A49R</name>
</gene>
<dbReference type="EMBL" id="D11079">
    <property type="protein sequence ID" value="BAA01823.1"/>
    <property type="molecule type" value="Genomic_DNA"/>
</dbReference>
<dbReference type="EMBL" id="AY243312">
    <property type="protein sequence ID" value="AAO89454.1"/>
    <property type="molecule type" value="Genomic_DNA"/>
</dbReference>
<dbReference type="PIR" id="JQ1787">
    <property type="entry name" value="JQ1787"/>
</dbReference>
<dbReference type="RefSeq" id="YP_233057.1">
    <property type="nucleotide sequence ID" value="NC_006998.1"/>
</dbReference>
<dbReference type="PDB" id="4D5R">
    <property type="method" value="X-ray"/>
    <property type="resolution" value="1.90 A"/>
    <property type="chains" value="A/B=13-162"/>
</dbReference>
<dbReference type="PDB" id="4D5S">
    <property type="method" value="X-ray"/>
    <property type="resolution" value="3.00 A"/>
    <property type="chains" value="A/B=1-162"/>
</dbReference>
<dbReference type="PDB" id="4D5T">
    <property type="method" value="X-ray"/>
    <property type="resolution" value="1.84 A"/>
    <property type="chains" value="A/B/C/D/E/F/G/H=13-162"/>
</dbReference>
<dbReference type="PDBsum" id="4D5R"/>
<dbReference type="PDBsum" id="4D5S"/>
<dbReference type="PDBsum" id="4D5T"/>
<dbReference type="SMR" id="P31037"/>
<dbReference type="BioGRID" id="3509058">
    <property type="interactions" value="1"/>
</dbReference>
<dbReference type="DIP" id="DIP-2163N"/>
<dbReference type="IntAct" id="P31037">
    <property type="interactions" value="1"/>
</dbReference>
<dbReference type="MINT" id="P31037"/>
<dbReference type="DNASU" id="3707704"/>
<dbReference type="GeneID" id="3707704"/>
<dbReference type="KEGG" id="vg:3707704"/>
<dbReference type="EvolutionaryTrace" id="P31037"/>
<dbReference type="Proteomes" id="UP000000344">
    <property type="component" value="Genome"/>
</dbReference>
<dbReference type="GO" id="GO:0030430">
    <property type="term" value="C:host cell cytoplasm"/>
    <property type="evidence" value="ECO:0000305"/>
    <property type="project" value="UniProt"/>
</dbReference>
<dbReference type="GO" id="GO:0042025">
    <property type="term" value="C:host cell nucleus"/>
    <property type="evidence" value="ECO:0007669"/>
    <property type="project" value="UniProtKB-SubCell"/>
</dbReference>
<dbReference type="GO" id="GO:0140311">
    <property type="term" value="F:protein sequestering activity"/>
    <property type="evidence" value="ECO:0000314"/>
    <property type="project" value="UniProt"/>
</dbReference>
<dbReference type="GO" id="GO:0085034">
    <property type="term" value="P:symbiont-mediated suppression of host NF-kappaB cascade"/>
    <property type="evidence" value="ECO:0000314"/>
    <property type="project" value="UniProt"/>
</dbReference>
<dbReference type="InterPro" id="IPR009473">
    <property type="entry name" value="Orthopox_A49"/>
</dbReference>
<dbReference type="Pfam" id="PF06489">
    <property type="entry name" value="Orthopox_A49R"/>
    <property type="match status" value="1"/>
</dbReference>
<proteinExistence type="evidence at protein level"/>
<name>A49_VACCW</name>
<organismHost>
    <name type="scientific">Bos taurus</name>
    <name type="common">Bovine</name>
    <dbReference type="NCBI Taxonomy" id="9913"/>
</organismHost>
<feature type="chain" id="PRO_0000099343" description="Protein A49R">
    <location>
        <begin position="1"/>
        <end position="162"/>
    </location>
</feature>
<feature type="helix" evidence="3">
    <location>
        <begin position="20"/>
        <end position="34"/>
    </location>
</feature>
<feature type="helix" evidence="3">
    <location>
        <begin position="35"/>
        <end position="37"/>
    </location>
</feature>
<feature type="helix" evidence="3">
    <location>
        <begin position="40"/>
        <end position="51"/>
    </location>
</feature>
<feature type="helix" evidence="3">
    <location>
        <begin position="60"/>
        <end position="72"/>
    </location>
</feature>
<feature type="helix" evidence="3">
    <location>
        <begin position="75"/>
        <end position="83"/>
    </location>
</feature>
<feature type="helix" evidence="3">
    <location>
        <begin position="87"/>
        <end position="98"/>
    </location>
</feature>
<feature type="helix" evidence="3">
    <location>
        <begin position="99"/>
        <end position="102"/>
    </location>
</feature>
<feature type="helix" evidence="3">
    <location>
        <begin position="106"/>
        <end position="120"/>
    </location>
</feature>
<feature type="helix" evidence="3">
    <location>
        <begin position="123"/>
        <end position="137"/>
    </location>
</feature>
<feature type="helix" evidence="3">
    <location>
        <begin position="143"/>
        <end position="161"/>
    </location>
</feature>
<sequence>MDEAYYSGNLESVLGYVSDMHTELASISQLVIAKIETIDNDILNKDIVNFIMCRSNLDNPFISFLDTVYTIIDQENYQTELINSLDDNEIIDCIVNKFMSFYKDNLENIVDAIITLKYIMNNPDFKTTYAEVLGSRIADIDIKQVIRENILQLSNDIRERYL</sequence>
<evidence type="ECO:0000269" key="1">
    <source>
    </source>
</evidence>
<evidence type="ECO:0000305" key="2"/>
<evidence type="ECO:0007829" key="3">
    <source>
        <dbReference type="PDB" id="4D5T"/>
    </source>
</evidence>
<organism>
    <name type="scientific">Vaccinia virus (strain Western Reserve)</name>
    <name type="common">VACV</name>
    <name type="synonym">Vaccinia virus (strain WR)</name>
    <dbReference type="NCBI Taxonomy" id="10254"/>
    <lineage>
        <taxon>Viruses</taxon>
        <taxon>Varidnaviria</taxon>
        <taxon>Bamfordvirae</taxon>
        <taxon>Nucleocytoviricota</taxon>
        <taxon>Pokkesviricetes</taxon>
        <taxon>Chitovirales</taxon>
        <taxon>Poxviridae</taxon>
        <taxon>Chordopoxvirinae</taxon>
        <taxon>Orthopoxvirus</taxon>
        <taxon>Vaccinia virus</taxon>
    </lineage>
</organism>